<feature type="chain" id="PRO_0000197059" description="Myb-related protein B">
    <location>
        <begin position="1"/>
        <end position="704"/>
    </location>
</feature>
<feature type="domain" description="HTH myb-type 1" evidence="3">
    <location>
        <begin position="26"/>
        <end position="77"/>
    </location>
</feature>
<feature type="domain" description="HTH myb-type 2" evidence="3">
    <location>
        <begin position="78"/>
        <end position="133"/>
    </location>
</feature>
<feature type="domain" description="HTH myb-type 3" evidence="3">
    <location>
        <begin position="134"/>
        <end position="184"/>
    </location>
</feature>
<feature type="DNA-binding region" description="H-T-H motif" evidence="3">
    <location>
        <begin position="54"/>
        <end position="77"/>
    </location>
</feature>
<feature type="DNA-binding region" description="H-T-H motif" evidence="3">
    <location>
        <begin position="106"/>
        <end position="129"/>
    </location>
</feature>
<feature type="DNA-binding region" description="H-T-H motif" evidence="3">
    <location>
        <begin position="157"/>
        <end position="180"/>
    </location>
</feature>
<feature type="region of interest" description="Disordered" evidence="4">
    <location>
        <begin position="325"/>
        <end position="412"/>
    </location>
</feature>
<feature type="region of interest" description="Disordered" evidence="4">
    <location>
        <begin position="603"/>
        <end position="626"/>
    </location>
</feature>
<feature type="compositionally biased region" description="Low complexity" evidence="4">
    <location>
        <begin position="339"/>
        <end position="366"/>
    </location>
</feature>
<feature type="compositionally biased region" description="Low complexity" evidence="4">
    <location>
        <begin position="607"/>
        <end position="620"/>
    </location>
</feature>
<feature type="modified residue" description="Phosphothreonine" evidence="2">
    <location>
        <position position="267"/>
    </location>
</feature>
<feature type="modified residue" description="Phosphoserine" evidence="2">
    <location>
        <position position="282"/>
    </location>
</feature>
<feature type="modified residue" description="Phosphoserine" evidence="2">
    <location>
        <position position="396"/>
    </location>
</feature>
<feature type="modified residue" description="Phosphothreonine; by CDK2" evidence="2">
    <location>
        <position position="443"/>
    </location>
</feature>
<feature type="modified residue" description="Phosphothreonine; by CDK2" evidence="2">
    <location>
        <position position="447"/>
    </location>
</feature>
<feature type="modified residue" description="Phosphothreonine; by CDK2" evidence="2">
    <location>
        <position position="490"/>
    </location>
</feature>
<feature type="modified residue" description="Phosphothreonine; by CDK2" evidence="2">
    <location>
        <position position="497"/>
    </location>
</feature>
<feature type="modified residue" description="Phosphothreonine; by CDK2" evidence="2">
    <location>
        <position position="524"/>
    </location>
</feature>
<feature type="modified residue" description="Phosphoserine; by CDK2" evidence="2">
    <location>
        <position position="581"/>
    </location>
</feature>
<feature type="cross-link" description="Glycyl lysine isopeptide (Lys-Gly) (interchain with G-Cter in SUMO2)" evidence="2">
    <location>
        <position position="104"/>
    </location>
</feature>
<feature type="cross-link" description="Glycyl lysine isopeptide (Lys-Gly) (interchain with G-Cter in SUMO2)" evidence="2">
    <location>
        <position position="197"/>
    </location>
</feature>
<feature type="cross-link" description="Glycyl lysine isopeptide (Lys-Gly) (interchain with G-Cter in SUMO2)" evidence="2">
    <location>
        <position position="275"/>
    </location>
</feature>
<feature type="cross-link" description="Glycyl lysine isopeptide (Lys-Gly) (interchain with G-Cter in SUMO2)" evidence="2">
    <location>
        <position position="414"/>
    </location>
</feature>
<feature type="cross-link" description="Glycyl lysine isopeptide (Lys-Gly) (interchain with G-Cter in SUMO2)" evidence="2">
    <location>
        <position position="450"/>
    </location>
</feature>
<feature type="cross-link" description="Glycyl lysine isopeptide (Lys-Gly) (interchain with G-Cter in SUMO2)" evidence="2">
    <location>
        <position position="485"/>
    </location>
</feature>
<feature type="cross-link" description="Glycyl lysine isopeptide (Lys-Gly) (interchain with G-Cter in SUMO2)" evidence="2">
    <location>
        <position position="502"/>
    </location>
</feature>
<feature type="cross-link" description="Glycyl lysine isopeptide (Lys-Gly) (interchain with G-Cter in SUMO2)" evidence="2">
    <location>
        <position position="513"/>
    </location>
</feature>
<feature type="cross-link" description="Glycyl lysine isopeptide (Lys-Gly) (interchain with G-Cter in SUMO2)" evidence="2">
    <location>
        <position position="527"/>
    </location>
</feature>
<feature type="cross-link" description="Glycyl lysine isopeptide (Lys-Gly) (interchain with G-Cter in SUMO2)" evidence="2">
    <location>
        <position position="537"/>
    </location>
</feature>
<feature type="cross-link" description="Glycyl lysine isopeptide (Lys-Gly) (interchain with G-Cter in SUMO2)" evidence="2">
    <location>
        <position position="550"/>
    </location>
</feature>
<feature type="cross-link" description="Glycyl lysine isopeptide (Lys-Gly) (interchain with G-Cter in SUMO2)" evidence="2">
    <location>
        <position position="588"/>
    </location>
</feature>
<feature type="cross-link" description="Glycyl lysine isopeptide (Lys-Gly) (interchain with G-Cter in SUMO2)" evidence="2">
    <location>
        <position position="600"/>
    </location>
</feature>
<feature type="cross-link" description="Glycyl lysine isopeptide (Lys-Gly) (interchain with G-Cter in SUMO2)" evidence="2">
    <location>
        <position position="629"/>
    </location>
</feature>
<feature type="cross-link" description="Glycyl lysine isopeptide (Lys-Gly) (interchain with G-Cter in SUMO2)" evidence="2">
    <location>
        <position position="643"/>
    </location>
</feature>
<feature type="cross-link" description="Glycyl lysine isopeptide (Lys-Gly) (interchain with G-Cter in SUMO2)" evidence="2">
    <location>
        <position position="652"/>
    </location>
</feature>
<feature type="helix" evidence="5">
    <location>
        <begin position="36"/>
        <end position="48"/>
    </location>
</feature>
<feature type="helix" evidence="5">
    <location>
        <begin position="54"/>
        <end position="60"/>
    </location>
</feature>
<feature type="strand" evidence="5">
    <location>
        <begin position="62"/>
        <end position="64"/>
    </location>
</feature>
<feature type="helix" evidence="5">
    <location>
        <begin position="66"/>
        <end position="75"/>
    </location>
</feature>
<name>MYBB_MOUSE</name>
<evidence type="ECO:0000250" key="1"/>
<evidence type="ECO:0000250" key="2">
    <source>
        <dbReference type="UniProtKB" id="P10244"/>
    </source>
</evidence>
<evidence type="ECO:0000255" key="3">
    <source>
        <dbReference type="PROSITE-ProRule" id="PRU00625"/>
    </source>
</evidence>
<evidence type="ECO:0000256" key="4">
    <source>
        <dbReference type="SAM" id="MobiDB-lite"/>
    </source>
</evidence>
<evidence type="ECO:0007829" key="5">
    <source>
        <dbReference type="PDB" id="2D9A"/>
    </source>
</evidence>
<organism>
    <name type="scientific">Mus musculus</name>
    <name type="common">Mouse</name>
    <dbReference type="NCBI Taxonomy" id="10090"/>
    <lineage>
        <taxon>Eukaryota</taxon>
        <taxon>Metazoa</taxon>
        <taxon>Chordata</taxon>
        <taxon>Craniata</taxon>
        <taxon>Vertebrata</taxon>
        <taxon>Euteleostomi</taxon>
        <taxon>Mammalia</taxon>
        <taxon>Eutheria</taxon>
        <taxon>Euarchontoglires</taxon>
        <taxon>Glires</taxon>
        <taxon>Rodentia</taxon>
        <taxon>Myomorpha</taxon>
        <taxon>Muroidea</taxon>
        <taxon>Muridae</taxon>
        <taxon>Murinae</taxon>
        <taxon>Mus</taxon>
        <taxon>Mus</taxon>
    </lineage>
</organism>
<sequence>MSRRTRCEDLDELHYQDVDSDLLEQRDNRCKVKWTHEEDEQLRALVRQFGQQDWKFLASHFPNRTDQQCQYRWLRVLNPDLVKGPWTKEEDQKVIELVKKYGTKQWTLIAKHLKGRLGKQCRERWHNHLNPEVKKSCWTEEEDRIICEAHKVLGNRWAEIAKMLPGRTDNAVKNHWNSTIKRKVDTGGFPAESRDCKPVYLLLELEDKEQHQGVQPVDGQGSLVSSWPLVPSIVKEESSEEEIAIAATSAKELGHEPVPADLGEVRTPEPPESLKREYQEFSSPETSLPYKWVVEAANLLIPAVGSSLSEALDLIESDPDAWCDLSKFDLPEEPSTEGSVVSSPVQPQTSQQQQEEALQSSQQAATPGPSVTEYRLDGHTISDLSRSSRGELIPISPSTEFGGSGIGTPPSVLKRQKKRRVALSPVTENSASLSFLDSCNSLTPKSTPVKTLPFSPSQFLNFWNKQDTLELESPSLTSTPVCSQKVVVTTPLHRDKTPLHQKYPSSEVLPDQKYSMDNTPHTPTPFKNALEKYGPLKPLPQTPHLEEDLKEVLRSEAGMELIIEDDMRPEKQKRKPGLRRSPIKKVRKSLALDIMDEDGKLMSSTMPKPLSLPTSVTPSSCGFTSPGSKEGNSLLNQGFLQAKPEKVVAAQKTRSHIPTPAPMTHAWKTVACGGTKDQLFMQEKARQLLSRLKSSHTSRTLILS</sequence>
<dbReference type="EMBL" id="X70472">
    <property type="protein sequence ID" value="CAA49898.1"/>
    <property type="molecule type" value="mRNA"/>
</dbReference>
<dbReference type="EMBL" id="AK028497">
    <property type="protein sequence ID" value="BAC25979.1"/>
    <property type="molecule type" value="mRNA"/>
</dbReference>
<dbReference type="EMBL" id="BC050842">
    <property type="protein sequence ID" value="AAH50842.1"/>
    <property type="molecule type" value="mRNA"/>
</dbReference>
<dbReference type="EMBL" id="X73028">
    <property type="protein sequence ID" value="CAA51511.1"/>
    <property type="molecule type" value="Genomic_DNA"/>
</dbReference>
<dbReference type="CCDS" id="CCDS17006.1"/>
<dbReference type="PIR" id="S33704">
    <property type="entry name" value="S33704"/>
</dbReference>
<dbReference type="RefSeq" id="NP_032678.1">
    <property type="nucleotide sequence ID" value="NM_008652.2"/>
</dbReference>
<dbReference type="PDB" id="2D9A">
    <property type="method" value="NMR"/>
    <property type="chains" value="A=31-77"/>
</dbReference>
<dbReference type="PDBsum" id="2D9A"/>
<dbReference type="BMRB" id="P48972"/>
<dbReference type="SMR" id="P48972"/>
<dbReference type="BioGRID" id="201633">
    <property type="interactions" value="14"/>
</dbReference>
<dbReference type="FunCoup" id="P48972">
    <property type="interactions" value="2364"/>
</dbReference>
<dbReference type="IntAct" id="P48972">
    <property type="interactions" value="3"/>
</dbReference>
<dbReference type="STRING" id="10090.ENSMUSP00000018005"/>
<dbReference type="GlyGen" id="P48972">
    <property type="glycosylation" value="2 sites"/>
</dbReference>
<dbReference type="iPTMnet" id="P48972"/>
<dbReference type="PhosphoSitePlus" id="P48972"/>
<dbReference type="jPOST" id="P48972"/>
<dbReference type="PaxDb" id="10090-ENSMUSP00000018005"/>
<dbReference type="PeptideAtlas" id="P48972"/>
<dbReference type="ProteomicsDB" id="287647"/>
<dbReference type="Antibodypedia" id="4478">
    <property type="antibodies" value="403 antibodies from 39 providers"/>
</dbReference>
<dbReference type="DNASU" id="17865"/>
<dbReference type="Ensembl" id="ENSMUST00000018005.10">
    <property type="protein sequence ID" value="ENSMUSP00000018005.4"/>
    <property type="gene ID" value="ENSMUSG00000017861.12"/>
</dbReference>
<dbReference type="GeneID" id="17865"/>
<dbReference type="KEGG" id="mmu:17865"/>
<dbReference type="UCSC" id="uc008nsl.1">
    <property type="organism name" value="mouse"/>
</dbReference>
<dbReference type="AGR" id="MGI:101785"/>
<dbReference type="CTD" id="4605"/>
<dbReference type="MGI" id="MGI:101785">
    <property type="gene designation" value="Mybl2"/>
</dbReference>
<dbReference type="VEuPathDB" id="HostDB:ENSMUSG00000017861"/>
<dbReference type="eggNOG" id="KOG0048">
    <property type="taxonomic scope" value="Eukaryota"/>
</dbReference>
<dbReference type="GeneTree" id="ENSGT00940000156091"/>
<dbReference type="HOGENOM" id="CLU_015440_1_0_1"/>
<dbReference type="InParanoid" id="P48972"/>
<dbReference type="OMA" id="EFPKQED"/>
<dbReference type="OrthoDB" id="2143914at2759"/>
<dbReference type="PhylomeDB" id="P48972"/>
<dbReference type="TreeFam" id="TF326257"/>
<dbReference type="BioGRID-ORCS" id="17865">
    <property type="hits" value="25 hits in 83 CRISPR screens"/>
</dbReference>
<dbReference type="ChiTaRS" id="Mybl2">
    <property type="organism name" value="mouse"/>
</dbReference>
<dbReference type="EvolutionaryTrace" id="P48972"/>
<dbReference type="PRO" id="PR:P48972"/>
<dbReference type="Proteomes" id="UP000000589">
    <property type="component" value="Chromosome 2"/>
</dbReference>
<dbReference type="RNAct" id="P48972">
    <property type="molecule type" value="protein"/>
</dbReference>
<dbReference type="Bgee" id="ENSMUSG00000017861">
    <property type="expression patterns" value="Expressed in animal zygote and 138 other cell types or tissues"/>
</dbReference>
<dbReference type="ExpressionAtlas" id="P48972">
    <property type="expression patterns" value="baseline and differential"/>
</dbReference>
<dbReference type="GO" id="GO:0005829">
    <property type="term" value="C:cytosol"/>
    <property type="evidence" value="ECO:0007669"/>
    <property type="project" value="Ensembl"/>
</dbReference>
<dbReference type="GO" id="GO:0031523">
    <property type="term" value="C:Myb complex"/>
    <property type="evidence" value="ECO:0000314"/>
    <property type="project" value="MGI"/>
</dbReference>
<dbReference type="GO" id="GO:0005654">
    <property type="term" value="C:nucleoplasm"/>
    <property type="evidence" value="ECO:0000304"/>
    <property type="project" value="Reactome"/>
</dbReference>
<dbReference type="GO" id="GO:0005634">
    <property type="term" value="C:nucleus"/>
    <property type="evidence" value="ECO:0000314"/>
    <property type="project" value="MGI"/>
</dbReference>
<dbReference type="GO" id="GO:0001228">
    <property type="term" value="F:DNA-binding transcription activator activity, RNA polymerase II-specific"/>
    <property type="evidence" value="ECO:0007669"/>
    <property type="project" value="Ensembl"/>
</dbReference>
<dbReference type="GO" id="GO:0000978">
    <property type="term" value="F:RNA polymerase II cis-regulatory region sequence-specific DNA binding"/>
    <property type="evidence" value="ECO:0007669"/>
    <property type="project" value="Ensembl"/>
</dbReference>
<dbReference type="GO" id="GO:1990830">
    <property type="term" value="P:cellular response to leukemia inhibitory factor"/>
    <property type="evidence" value="ECO:0000270"/>
    <property type="project" value="MGI"/>
</dbReference>
<dbReference type="GO" id="GO:0090307">
    <property type="term" value="P:mitotic spindle assembly"/>
    <property type="evidence" value="ECO:0000314"/>
    <property type="project" value="MGI"/>
</dbReference>
<dbReference type="CDD" id="cd00167">
    <property type="entry name" value="SANT"/>
    <property type="match status" value="3"/>
</dbReference>
<dbReference type="FunFam" id="1.10.10.60:FF:000201">
    <property type="entry name" value="MYB proto-oncogene like 2"/>
    <property type="match status" value="1"/>
</dbReference>
<dbReference type="FunFam" id="1.10.10.60:FF:000216">
    <property type="entry name" value="MYB proto-oncogene like 2"/>
    <property type="match status" value="1"/>
</dbReference>
<dbReference type="FunFam" id="1.10.10.60:FF:000010">
    <property type="entry name" value="Transcriptional activator Myb isoform A"/>
    <property type="match status" value="1"/>
</dbReference>
<dbReference type="Gene3D" id="1.10.10.60">
    <property type="entry name" value="Homeodomain-like"/>
    <property type="match status" value="3"/>
</dbReference>
<dbReference type="InterPro" id="IPR015395">
    <property type="entry name" value="C-myb_C"/>
</dbReference>
<dbReference type="InterPro" id="IPR009057">
    <property type="entry name" value="Homeodomain-like_sf"/>
</dbReference>
<dbReference type="InterPro" id="IPR017930">
    <property type="entry name" value="Myb_dom"/>
</dbReference>
<dbReference type="InterPro" id="IPR050560">
    <property type="entry name" value="MYB_TF"/>
</dbReference>
<dbReference type="InterPro" id="IPR001005">
    <property type="entry name" value="SANT/Myb"/>
</dbReference>
<dbReference type="PANTHER" id="PTHR45614">
    <property type="entry name" value="MYB PROTEIN-RELATED"/>
    <property type="match status" value="1"/>
</dbReference>
<dbReference type="PANTHER" id="PTHR45614:SF51">
    <property type="entry name" value="MYB-LIKE DNA-BINDING PROTEIN BAS1"/>
    <property type="match status" value="1"/>
</dbReference>
<dbReference type="Pfam" id="PF09316">
    <property type="entry name" value="Cmyb_C"/>
    <property type="match status" value="1"/>
</dbReference>
<dbReference type="Pfam" id="PF13921">
    <property type="entry name" value="Myb_DNA-bind_6"/>
    <property type="match status" value="1"/>
</dbReference>
<dbReference type="Pfam" id="PF00249">
    <property type="entry name" value="Myb_DNA-binding"/>
    <property type="match status" value="1"/>
</dbReference>
<dbReference type="SMART" id="SM00717">
    <property type="entry name" value="SANT"/>
    <property type="match status" value="3"/>
</dbReference>
<dbReference type="SUPFAM" id="SSF46689">
    <property type="entry name" value="Homeodomain-like"/>
    <property type="match status" value="2"/>
</dbReference>
<dbReference type="PROSITE" id="PS51294">
    <property type="entry name" value="HTH_MYB"/>
    <property type="match status" value="3"/>
</dbReference>
<comment type="function">
    <text evidence="1">Transcription factor involved in the regulation of cell survival, proliferation, and differentiation. Transactivates the expression of the CLU gene (By similarity).</text>
</comment>
<comment type="subunit">
    <text evidence="2">Component of the DREAM complex (also named LINC complex) at least composed of E2F4, E2F5, LIN9, LIN37, LIN52, LIN54, MYBL1, MYBL2, RBL1, RBL2, RBBP4, TFDP1 and TFDP2. The complex exists in quiescent cells where it represses cell cycle-dependent genes. It dissociates in S phase when LIN9, LIN37, LIN52 and LIN54 form a subcomplex that binds to MYBL2 (By similarity). Interacts with CCNF (via the Cyclin N-terminal domain) (By similarity).</text>
</comment>
<comment type="subcellular location">
    <subcellularLocation>
        <location>Nucleus</location>
    </subcellularLocation>
</comment>
<comment type="PTM">
    <text evidence="1">Phosphorylated by cyclin A/CDK2 during S-phase. Phosphorylation at Thr-524 is probably involved in transcriptional activity (By similarity).</text>
</comment>
<protein>
    <recommendedName>
        <fullName>Myb-related protein B</fullName>
        <shortName>B-Myb</shortName>
    </recommendedName>
    <alternativeName>
        <fullName>Myb-like protein 2</fullName>
    </alternativeName>
</protein>
<keyword id="KW-0002">3D-structure</keyword>
<keyword id="KW-0238">DNA-binding</keyword>
<keyword id="KW-1017">Isopeptide bond</keyword>
<keyword id="KW-0539">Nucleus</keyword>
<keyword id="KW-0597">Phosphoprotein</keyword>
<keyword id="KW-1185">Reference proteome</keyword>
<keyword id="KW-0677">Repeat</keyword>
<keyword id="KW-0804">Transcription</keyword>
<keyword id="KW-0805">Transcription regulation</keyword>
<keyword id="KW-0832">Ubl conjugation</keyword>
<proteinExistence type="evidence at protein level"/>
<accession>P48972</accession>
<reference key="1">
    <citation type="journal article" date="1992" name="Oncogene">
        <title>Characterization and cell cycle-regulated expression of mouse B-myb.</title>
        <authorList>
            <person name="Lam E.W."/>
            <person name="Robinson C."/>
            <person name="Watson R.J."/>
        </authorList>
    </citation>
    <scope>NUCLEOTIDE SEQUENCE</scope>
</reference>
<reference key="2">
    <citation type="journal article" date="2005" name="Science">
        <title>The transcriptional landscape of the mammalian genome.</title>
        <authorList>
            <person name="Carninci P."/>
            <person name="Kasukawa T."/>
            <person name="Katayama S."/>
            <person name="Gough J."/>
            <person name="Frith M.C."/>
            <person name="Maeda N."/>
            <person name="Oyama R."/>
            <person name="Ravasi T."/>
            <person name="Lenhard B."/>
            <person name="Wells C."/>
            <person name="Kodzius R."/>
            <person name="Shimokawa K."/>
            <person name="Bajic V.B."/>
            <person name="Brenner S.E."/>
            <person name="Batalov S."/>
            <person name="Forrest A.R."/>
            <person name="Zavolan M."/>
            <person name="Davis M.J."/>
            <person name="Wilming L.G."/>
            <person name="Aidinis V."/>
            <person name="Allen J.E."/>
            <person name="Ambesi-Impiombato A."/>
            <person name="Apweiler R."/>
            <person name="Aturaliya R.N."/>
            <person name="Bailey T.L."/>
            <person name="Bansal M."/>
            <person name="Baxter L."/>
            <person name="Beisel K.W."/>
            <person name="Bersano T."/>
            <person name="Bono H."/>
            <person name="Chalk A.M."/>
            <person name="Chiu K.P."/>
            <person name="Choudhary V."/>
            <person name="Christoffels A."/>
            <person name="Clutterbuck D.R."/>
            <person name="Crowe M.L."/>
            <person name="Dalla E."/>
            <person name="Dalrymple B.P."/>
            <person name="de Bono B."/>
            <person name="Della Gatta G."/>
            <person name="di Bernardo D."/>
            <person name="Down T."/>
            <person name="Engstrom P."/>
            <person name="Fagiolini M."/>
            <person name="Faulkner G."/>
            <person name="Fletcher C.F."/>
            <person name="Fukushima T."/>
            <person name="Furuno M."/>
            <person name="Futaki S."/>
            <person name="Gariboldi M."/>
            <person name="Georgii-Hemming P."/>
            <person name="Gingeras T.R."/>
            <person name="Gojobori T."/>
            <person name="Green R.E."/>
            <person name="Gustincich S."/>
            <person name="Harbers M."/>
            <person name="Hayashi Y."/>
            <person name="Hensch T.K."/>
            <person name="Hirokawa N."/>
            <person name="Hill D."/>
            <person name="Huminiecki L."/>
            <person name="Iacono M."/>
            <person name="Ikeo K."/>
            <person name="Iwama A."/>
            <person name="Ishikawa T."/>
            <person name="Jakt M."/>
            <person name="Kanapin A."/>
            <person name="Katoh M."/>
            <person name="Kawasawa Y."/>
            <person name="Kelso J."/>
            <person name="Kitamura H."/>
            <person name="Kitano H."/>
            <person name="Kollias G."/>
            <person name="Krishnan S.P."/>
            <person name="Kruger A."/>
            <person name="Kummerfeld S.K."/>
            <person name="Kurochkin I.V."/>
            <person name="Lareau L.F."/>
            <person name="Lazarevic D."/>
            <person name="Lipovich L."/>
            <person name="Liu J."/>
            <person name="Liuni S."/>
            <person name="McWilliam S."/>
            <person name="Madan Babu M."/>
            <person name="Madera M."/>
            <person name="Marchionni L."/>
            <person name="Matsuda H."/>
            <person name="Matsuzawa S."/>
            <person name="Miki H."/>
            <person name="Mignone F."/>
            <person name="Miyake S."/>
            <person name="Morris K."/>
            <person name="Mottagui-Tabar S."/>
            <person name="Mulder N."/>
            <person name="Nakano N."/>
            <person name="Nakauchi H."/>
            <person name="Ng P."/>
            <person name="Nilsson R."/>
            <person name="Nishiguchi S."/>
            <person name="Nishikawa S."/>
            <person name="Nori F."/>
            <person name="Ohara O."/>
            <person name="Okazaki Y."/>
            <person name="Orlando V."/>
            <person name="Pang K.C."/>
            <person name="Pavan W.J."/>
            <person name="Pavesi G."/>
            <person name="Pesole G."/>
            <person name="Petrovsky N."/>
            <person name="Piazza S."/>
            <person name="Reed J."/>
            <person name="Reid J.F."/>
            <person name="Ring B.Z."/>
            <person name="Ringwald M."/>
            <person name="Rost B."/>
            <person name="Ruan Y."/>
            <person name="Salzberg S.L."/>
            <person name="Sandelin A."/>
            <person name="Schneider C."/>
            <person name="Schoenbach C."/>
            <person name="Sekiguchi K."/>
            <person name="Semple C.A."/>
            <person name="Seno S."/>
            <person name="Sessa L."/>
            <person name="Sheng Y."/>
            <person name="Shibata Y."/>
            <person name="Shimada H."/>
            <person name="Shimada K."/>
            <person name="Silva D."/>
            <person name="Sinclair B."/>
            <person name="Sperling S."/>
            <person name="Stupka E."/>
            <person name="Sugiura K."/>
            <person name="Sultana R."/>
            <person name="Takenaka Y."/>
            <person name="Taki K."/>
            <person name="Tammoja K."/>
            <person name="Tan S.L."/>
            <person name="Tang S."/>
            <person name="Taylor M.S."/>
            <person name="Tegner J."/>
            <person name="Teichmann S.A."/>
            <person name="Ueda H.R."/>
            <person name="van Nimwegen E."/>
            <person name="Verardo R."/>
            <person name="Wei C.L."/>
            <person name="Yagi K."/>
            <person name="Yamanishi H."/>
            <person name="Zabarovsky E."/>
            <person name="Zhu S."/>
            <person name="Zimmer A."/>
            <person name="Hide W."/>
            <person name="Bult C."/>
            <person name="Grimmond S.M."/>
            <person name="Teasdale R.D."/>
            <person name="Liu E.T."/>
            <person name="Brusic V."/>
            <person name="Quackenbush J."/>
            <person name="Wahlestedt C."/>
            <person name="Mattick J.S."/>
            <person name="Hume D.A."/>
            <person name="Kai C."/>
            <person name="Sasaki D."/>
            <person name="Tomaru Y."/>
            <person name="Fukuda S."/>
            <person name="Kanamori-Katayama M."/>
            <person name="Suzuki M."/>
            <person name="Aoki J."/>
            <person name="Arakawa T."/>
            <person name="Iida J."/>
            <person name="Imamura K."/>
            <person name="Itoh M."/>
            <person name="Kato T."/>
            <person name="Kawaji H."/>
            <person name="Kawagashira N."/>
            <person name="Kawashima T."/>
            <person name="Kojima M."/>
            <person name="Kondo S."/>
            <person name="Konno H."/>
            <person name="Nakano K."/>
            <person name="Ninomiya N."/>
            <person name="Nishio T."/>
            <person name="Okada M."/>
            <person name="Plessy C."/>
            <person name="Shibata K."/>
            <person name="Shiraki T."/>
            <person name="Suzuki S."/>
            <person name="Tagami M."/>
            <person name="Waki K."/>
            <person name="Watahiki A."/>
            <person name="Okamura-Oho Y."/>
            <person name="Suzuki H."/>
            <person name="Kawai J."/>
            <person name="Hayashizaki Y."/>
        </authorList>
    </citation>
    <scope>NUCLEOTIDE SEQUENCE [LARGE SCALE MRNA]</scope>
    <source>
        <strain>C57BL/6J</strain>
        <tissue>Skin</tissue>
    </source>
</reference>
<reference key="3">
    <citation type="journal article" date="2004" name="Genome Res.">
        <title>The status, quality, and expansion of the NIH full-length cDNA project: the Mammalian Gene Collection (MGC).</title>
        <authorList>
            <consortium name="The MGC Project Team"/>
        </authorList>
    </citation>
    <scope>NUCLEOTIDE SEQUENCE [LARGE SCALE MRNA]</scope>
    <source>
        <tissue>Limb</tissue>
    </source>
</reference>
<reference key="4">
    <citation type="journal article" date="1993" name="EMBO J.">
        <title>An E2F-binding site mediates cell-cycle regulated repression of mouse B-myb transcription.</title>
        <authorList>
            <person name="Lam E.W."/>
            <person name="Watson R.J."/>
        </authorList>
    </citation>
    <scope>NUCLEOTIDE SEQUENCE [GENOMIC DNA] OF 1-6</scope>
</reference>
<reference key="5">
    <citation type="submission" date="2006-06" db="PDB data bank">
        <title>Solution structure of RSGI RUH-050, a myb DNA-binding domain in mouse.</title>
        <authorList>
            <consortium name="RIKEN structural genomics initiative (RSGI)"/>
        </authorList>
    </citation>
    <scope>STRUCTURE BY NMR OF 31-78</scope>
</reference>
<gene>
    <name type="primary">Mybl2</name>
    <name type="synonym">Bmyb</name>
</gene>